<proteinExistence type="inferred from homology"/>
<feature type="initiator methionine" description="Removed" evidence="1">
    <location>
        <position position="1"/>
    </location>
</feature>
<feature type="chain" id="PRO_0000070513" description="Photosystem II reaction center protein H">
    <location>
        <begin position="2"/>
        <end position="79"/>
    </location>
</feature>
<feature type="transmembrane region" description="Helical" evidence="2">
    <location>
        <begin position="41"/>
        <end position="61"/>
    </location>
</feature>
<feature type="modified residue" description="Phosphothreonine" evidence="2">
    <location>
        <position position="3"/>
    </location>
</feature>
<feature type="modified residue" description="Phosphothreonine" evidence="2">
    <location>
        <position position="5"/>
    </location>
</feature>
<keyword id="KW-0150">Chloroplast</keyword>
<keyword id="KW-0472">Membrane</keyword>
<keyword id="KW-0597">Phosphoprotein</keyword>
<keyword id="KW-0602">Photosynthesis</keyword>
<keyword id="KW-0604">Photosystem II</keyword>
<keyword id="KW-0934">Plastid</keyword>
<keyword id="KW-0793">Thylakoid</keyword>
<keyword id="KW-0812">Transmembrane</keyword>
<keyword id="KW-1133">Transmembrane helix</keyword>
<evidence type="ECO:0000250" key="1">
    <source>
        <dbReference type="UniProtKB" id="P56780"/>
    </source>
</evidence>
<evidence type="ECO:0000255" key="2">
    <source>
        <dbReference type="HAMAP-Rule" id="MF_00752"/>
    </source>
</evidence>
<reference key="1">
    <citation type="submission" date="2002-02" db="EMBL/GenBank/DDBJ databases">
        <title>psbB gene cluster in Charophyceae.</title>
        <authorList>
            <person name="Lee J."/>
            <person name="Manhart J.R."/>
        </authorList>
    </citation>
    <scope>NUCLEOTIDE SEQUENCE [GENOMIC DNA]</scope>
</reference>
<gene>
    <name evidence="2" type="primary">psbH</name>
</gene>
<protein>
    <recommendedName>
        <fullName evidence="2">Photosystem II reaction center protein H</fullName>
        <shortName evidence="2">PSII-H</shortName>
    </recommendedName>
    <alternativeName>
        <fullName evidence="2">Photosystem II 10 kDa phosphoprotein</fullName>
    </alternativeName>
</protein>
<accession>Q71KN4</accession>
<dbReference type="EMBL" id="AF482500">
    <property type="protein sequence ID" value="AAQ05924.1"/>
    <property type="molecule type" value="Genomic_DNA"/>
</dbReference>
<dbReference type="SMR" id="Q71KN4"/>
<dbReference type="GO" id="GO:0009535">
    <property type="term" value="C:chloroplast thylakoid membrane"/>
    <property type="evidence" value="ECO:0007669"/>
    <property type="project" value="UniProtKB-SubCell"/>
</dbReference>
<dbReference type="GO" id="GO:0009523">
    <property type="term" value="C:photosystem II"/>
    <property type="evidence" value="ECO:0007669"/>
    <property type="project" value="UniProtKB-KW"/>
</dbReference>
<dbReference type="GO" id="GO:0042301">
    <property type="term" value="F:phosphate ion binding"/>
    <property type="evidence" value="ECO:0007669"/>
    <property type="project" value="InterPro"/>
</dbReference>
<dbReference type="GO" id="GO:0015979">
    <property type="term" value="P:photosynthesis"/>
    <property type="evidence" value="ECO:0007669"/>
    <property type="project" value="UniProtKB-UniRule"/>
</dbReference>
<dbReference type="GO" id="GO:0050821">
    <property type="term" value="P:protein stabilization"/>
    <property type="evidence" value="ECO:0007669"/>
    <property type="project" value="InterPro"/>
</dbReference>
<dbReference type="Gene3D" id="1.20.5.880">
    <property type="entry name" value="Photosystem II reaction center protein H"/>
    <property type="match status" value="1"/>
</dbReference>
<dbReference type="HAMAP" id="MF_00752">
    <property type="entry name" value="PSII_PsbH"/>
    <property type="match status" value="1"/>
</dbReference>
<dbReference type="InterPro" id="IPR001056">
    <property type="entry name" value="PSII_PsbH"/>
</dbReference>
<dbReference type="InterPro" id="IPR036863">
    <property type="entry name" value="PSII_PsbH_sf"/>
</dbReference>
<dbReference type="NCBIfam" id="NF002728">
    <property type="entry name" value="PRK02624.1"/>
    <property type="match status" value="1"/>
</dbReference>
<dbReference type="PANTHER" id="PTHR34469">
    <property type="entry name" value="PHOTOSYSTEM II REACTION CENTER PROTEIN H"/>
    <property type="match status" value="1"/>
</dbReference>
<dbReference type="PANTHER" id="PTHR34469:SF4">
    <property type="entry name" value="PHOTOSYSTEM II REACTION CENTER PROTEIN H"/>
    <property type="match status" value="1"/>
</dbReference>
<dbReference type="Pfam" id="PF00737">
    <property type="entry name" value="PsbH"/>
    <property type="match status" value="1"/>
</dbReference>
<dbReference type="SUPFAM" id="SSF161025">
    <property type="entry name" value="Photosystem II 10 kDa phosphoprotein PsbH"/>
    <property type="match status" value="1"/>
</dbReference>
<sequence>MATKTLDQDPNKQRPGAAVSSVLKPLNAEYGKVAPGWGTTVLMGVFMALFAVFLVIILELYNASVLLDGVPVSWQSVQS</sequence>
<geneLocation type="chloroplast"/>
<name>PSBH_KLEBI</name>
<comment type="function">
    <text evidence="2">One of the components of the core complex of photosystem II (PSII), required for its stability and/or assembly. PSII is a light-driven water:plastoquinone oxidoreductase that uses light energy to abstract electrons from H(2)O, generating O(2) and a proton gradient subsequently used for ATP formation. It consists of a core antenna complex that captures photons, and an electron transfer chain that converts photonic excitation into a charge separation.</text>
</comment>
<comment type="subunit">
    <text evidence="2">PSII is composed of 1 copy each of membrane proteins PsbA, PsbB, PsbC, PsbD, PsbE, PsbF, PsbH, PsbI, PsbJ, PsbK, PsbL, PsbM, PsbT, PsbX, PsbY, PsbZ, Psb30/Ycf12, at least 3 peripheral proteins of the oxygen-evolving complex and a large number of cofactors. It forms dimeric complexes.</text>
</comment>
<comment type="subcellular location">
    <subcellularLocation>
        <location evidence="2">Plastid</location>
        <location evidence="2">Chloroplast thylakoid membrane</location>
        <topology evidence="2">Single-pass membrane protein</topology>
    </subcellularLocation>
</comment>
<comment type="PTM">
    <text evidence="2">Phosphorylation is a light-dependent reaction catalyzed by a membrane-bound kinase; phosphorylation occurs on Thr residue(s) in the N-terminus of the protein.</text>
</comment>
<comment type="similarity">
    <text evidence="2">Belongs to the PsbH family.</text>
</comment>
<organism>
    <name type="scientific">Klebsormidium bilatum</name>
    <name type="common">Filamentous green alga</name>
    <dbReference type="NCBI Taxonomy" id="201239"/>
    <lineage>
        <taxon>Eukaryota</taxon>
        <taxon>Viridiplantae</taxon>
        <taxon>Streptophyta</taxon>
        <taxon>Klebsormidiophyceae</taxon>
        <taxon>Klebsormidiales</taxon>
        <taxon>Klebsormidiaceae</taxon>
        <taxon>Klebsormidium</taxon>
    </lineage>
</organism>